<reference key="1">
    <citation type="journal article" date="2005" name="Nature">
        <title>The map-based sequence of the rice genome.</title>
        <authorList>
            <consortium name="International rice genome sequencing project (IRGSP)"/>
        </authorList>
    </citation>
    <scope>NUCLEOTIDE SEQUENCE [LARGE SCALE GENOMIC DNA]</scope>
    <source>
        <strain>cv. Nipponbare</strain>
    </source>
</reference>
<reference key="2">
    <citation type="journal article" date="2008" name="Nucleic Acids Res.">
        <title>The rice annotation project database (RAP-DB): 2008 update.</title>
        <authorList>
            <consortium name="The rice annotation project (RAP)"/>
        </authorList>
    </citation>
    <scope>GENOME REANNOTATION</scope>
    <source>
        <strain>cv. Nipponbare</strain>
    </source>
</reference>
<reference key="3">
    <citation type="journal article" date="2013" name="Rice">
        <title>Improvement of the Oryza sativa Nipponbare reference genome using next generation sequence and optical map data.</title>
        <authorList>
            <person name="Kawahara Y."/>
            <person name="de la Bastide M."/>
            <person name="Hamilton J.P."/>
            <person name="Kanamori H."/>
            <person name="McCombie W.R."/>
            <person name="Ouyang S."/>
            <person name="Schwartz D.C."/>
            <person name="Tanaka T."/>
            <person name="Wu J."/>
            <person name="Zhou S."/>
            <person name="Childs K.L."/>
            <person name="Davidson R.M."/>
            <person name="Lin H."/>
            <person name="Quesada-Ocampo L."/>
            <person name="Vaillancourt B."/>
            <person name="Sakai H."/>
            <person name="Lee S.S."/>
            <person name="Kim J."/>
            <person name="Numa H."/>
            <person name="Itoh T."/>
            <person name="Buell C.R."/>
            <person name="Matsumoto T."/>
        </authorList>
    </citation>
    <scope>GENOME REANNOTATION</scope>
    <source>
        <strain>cv. Nipponbare</strain>
    </source>
</reference>
<reference key="4">
    <citation type="journal article" date="2005" name="PLoS Biol.">
        <title>The genomes of Oryza sativa: a history of duplications.</title>
        <authorList>
            <person name="Yu J."/>
            <person name="Wang J."/>
            <person name="Lin W."/>
            <person name="Li S."/>
            <person name="Li H."/>
            <person name="Zhou J."/>
            <person name="Ni P."/>
            <person name="Dong W."/>
            <person name="Hu S."/>
            <person name="Zeng C."/>
            <person name="Zhang J."/>
            <person name="Zhang Y."/>
            <person name="Li R."/>
            <person name="Xu Z."/>
            <person name="Li S."/>
            <person name="Li X."/>
            <person name="Zheng H."/>
            <person name="Cong L."/>
            <person name="Lin L."/>
            <person name="Yin J."/>
            <person name="Geng J."/>
            <person name="Li G."/>
            <person name="Shi J."/>
            <person name="Liu J."/>
            <person name="Lv H."/>
            <person name="Li J."/>
            <person name="Wang J."/>
            <person name="Deng Y."/>
            <person name="Ran L."/>
            <person name="Shi X."/>
            <person name="Wang X."/>
            <person name="Wu Q."/>
            <person name="Li C."/>
            <person name="Ren X."/>
            <person name="Wang J."/>
            <person name="Wang X."/>
            <person name="Li D."/>
            <person name="Liu D."/>
            <person name="Zhang X."/>
            <person name="Ji Z."/>
            <person name="Zhao W."/>
            <person name="Sun Y."/>
            <person name="Zhang Z."/>
            <person name="Bao J."/>
            <person name="Han Y."/>
            <person name="Dong L."/>
            <person name="Ji J."/>
            <person name="Chen P."/>
            <person name="Wu S."/>
            <person name="Liu J."/>
            <person name="Xiao Y."/>
            <person name="Bu D."/>
            <person name="Tan J."/>
            <person name="Yang L."/>
            <person name="Ye C."/>
            <person name="Zhang J."/>
            <person name="Xu J."/>
            <person name="Zhou Y."/>
            <person name="Yu Y."/>
            <person name="Zhang B."/>
            <person name="Zhuang S."/>
            <person name="Wei H."/>
            <person name="Liu B."/>
            <person name="Lei M."/>
            <person name="Yu H."/>
            <person name="Li Y."/>
            <person name="Xu H."/>
            <person name="Wei S."/>
            <person name="He X."/>
            <person name="Fang L."/>
            <person name="Zhang Z."/>
            <person name="Zhang Y."/>
            <person name="Huang X."/>
            <person name="Su Z."/>
            <person name="Tong W."/>
            <person name="Li J."/>
            <person name="Tong Z."/>
            <person name="Li S."/>
            <person name="Ye J."/>
            <person name="Wang L."/>
            <person name="Fang L."/>
            <person name="Lei T."/>
            <person name="Chen C.-S."/>
            <person name="Chen H.-C."/>
            <person name="Xu Z."/>
            <person name="Li H."/>
            <person name="Huang H."/>
            <person name="Zhang F."/>
            <person name="Xu H."/>
            <person name="Li N."/>
            <person name="Zhao C."/>
            <person name="Li S."/>
            <person name="Dong L."/>
            <person name="Huang Y."/>
            <person name="Li L."/>
            <person name="Xi Y."/>
            <person name="Qi Q."/>
            <person name="Li W."/>
            <person name="Zhang B."/>
            <person name="Hu W."/>
            <person name="Zhang Y."/>
            <person name="Tian X."/>
            <person name="Jiao Y."/>
            <person name="Liang X."/>
            <person name="Jin J."/>
            <person name="Gao L."/>
            <person name="Zheng W."/>
            <person name="Hao B."/>
            <person name="Liu S.-M."/>
            <person name="Wang W."/>
            <person name="Yuan L."/>
            <person name="Cao M."/>
            <person name="McDermott J."/>
            <person name="Samudrala R."/>
            <person name="Wang J."/>
            <person name="Wong G.K.-S."/>
            <person name="Yang H."/>
        </authorList>
    </citation>
    <scope>NUCLEOTIDE SEQUENCE [LARGE SCALE GENOMIC DNA]</scope>
    <source>
        <strain>cv. Nipponbare</strain>
    </source>
</reference>
<reference key="5">
    <citation type="journal article" date="2003" name="Science">
        <title>Collection, mapping, and annotation of over 28,000 cDNA clones from japonica rice.</title>
        <authorList>
            <consortium name="The rice full-length cDNA consortium"/>
        </authorList>
    </citation>
    <scope>NUCLEOTIDE SEQUENCE [LARGE SCALE MRNA] OF 587-884</scope>
    <source>
        <strain>cv. Nipponbare</strain>
    </source>
</reference>
<keyword id="KW-0067">ATP-binding</keyword>
<keyword id="KW-0378">Hydrolase</keyword>
<keyword id="KW-0547">Nucleotide-binding</keyword>
<keyword id="KW-0576">Peroxisome</keyword>
<keyword id="KW-0645">Protease</keyword>
<keyword id="KW-1185">Reference proteome</keyword>
<keyword id="KW-0720">Serine protease</keyword>
<evidence type="ECO:0000255" key="1">
    <source>
        <dbReference type="HAMAP-Rule" id="MF_03121"/>
    </source>
</evidence>
<evidence type="ECO:0000255" key="2">
    <source>
        <dbReference type="PROSITE-ProRule" id="PRU01122"/>
    </source>
</evidence>
<evidence type="ECO:0000255" key="3">
    <source>
        <dbReference type="PROSITE-ProRule" id="PRU01123"/>
    </source>
</evidence>
<evidence type="ECO:0000256" key="4">
    <source>
        <dbReference type="SAM" id="MobiDB-lite"/>
    </source>
</evidence>
<evidence type="ECO:0000305" key="5"/>
<gene>
    <name type="ordered locus">Os09g0533400</name>
    <name type="ordered locus">LOC_Os09g36300</name>
    <name type="ORF">OJ1112_E07.9</name>
    <name type="ORF">OsJ_30122</name>
    <name type="ORF">P0515E01.28</name>
</gene>
<dbReference type="EC" id="3.4.21.53" evidence="1"/>
<dbReference type="EMBL" id="AP005092">
    <property type="protein sequence ID" value="BAD33324.1"/>
    <property type="status" value="ALT_SEQ"/>
    <property type="molecule type" value="Genomic_DNA"/>
</dbReference>
<dbReference type="EMBL" id="AP005314">
    <property type="protein sequence ID" value="BAD46033.1"/>
    <property type="status" value="ALT_SEQ"/>
    <property type="molecule type" value="Genomic_DNA"/>
</dbReference>
<dbReference type="EMBL" id="AP008215">
    <property type="protein sequence ID" value="BAF25683.1"/>
    <property type="molecule type" value="Genomic_DNA"/>
</dbReference>
<dbReference type="EMBL" id="AP014965">
    <property type="status" value="NOT_ANNOTATED_CDS"/>
    <property type="molecule type" value="Genomic_DNA"/>
</dbReference>
<dbReference type="EMBL" id="CM000146">
    <property type="protein sequence ID" value="EEE70111.1"/>
    <property type="molecule type" value="Genomic_DNA"/>
</dbReference>
<dbReference type="EMBL" id="AK061670">
    <property type="status" value="NOT_ANNOTATED_CDS"/>
    <property type="molecule type" value="mRNA"/>
</dbReference>
<dbReference type="RefSeq" id="XP_015611598.1">
    <property type="nucleotide sequence ID" value="XM_015756112.1"/>
</dbReference>
<dbReference type="SMR" id="Q0J032"/>
<dbReference type="FunCoup" id="Q0J032">
    <property type="interactions" value="566"/>
</dbReference>
<dbReference type="STRING" id="39947.Q0J032"/>
<dbReference type="MEROPS" id="S16.003"/>
<dbReference type="PaxDb" id="39947-Q0J032"/>
<dbReference type="EnsemblPlants" id="Os09t0533400-01">
    <property type="protein sequence ID" value="Os09t0533400-01"/>
    <property type="gene ID" value="Os09g0533400"/>
</dbReference>
<dbReference type="Gramene" id="Os09t0533400-01">
    <property type="protein sequence ID" value="Os09t0533400-01"/>
    <property type="gene ID" value="Os09g0533400"/>
</dbReference>
<dbReference type="KEGG" id="dosa:Os09g0533400"/>
<dbReference type="eggNOG" id="KOG2004">
    <property type="taxonomic scope" value="Eukaryota"/>
</dbReference>
<dbReference type="HOGENOM" id="CLU_091305_0_0_1"/>
<dbReference type="InParanoid" id="Q0J032"/>
<dbReference type="OrthoDB" id="2411602at2759"/>
<dbReference type="Proteomes" id="UP000000763">
    <property type="component" value="Chromosome 9"/>
</dbReference>
<dbReference type="Proteomes" id="UP000007752">
    <property type="component" value="Chromosome 9"/>
</dbReference>
<dbReference type="Proteomes" id="UP000059680">
    <property type="component" value="Chromosome 9"/>
</dbReference>
<dbReference type="GO" id="GO:0005782">
    <property type="term" value="C:peroxisomal matrix"/>
    <property type="evidence" value="ECO:0000318"/>
    <property type="project" value="GO_Central"/>
</dbReference>
<dbReference type="GO" id="GO:0005524">
    <property type="term" value="F:ATP binding"/>
    <property type="evidence" value="ECO:0007669"/>
    <property type="project" value="UniProtKB-UniRule"/>
</dbReference>
<dbReference type="GO" id="GO:0016887">
    <property type="term" value="F:ATP hydrolysis activity"/>
    <property type="evidence" value="ECO:0007669"/>
    <property type="project" value="UniProtKB-UniRule"/>
</dbReference>
<dbReference type="GO" id="GO:0004176">
    <property type="term" value="F:ATP-dependent peptidase activity"/>
    <property type="evidence" value="ECO:0007669"/>
    <property type="project" value="UniProtKB-UniRule"/>
</dbReference>
<dbReference type="GO" id="GO:0004252">
    <property type="term" value="F:serine-type endopeptidase activity"/>
    <property type="evidence" value="ECO:0007669"/>
    <property type="project" value="UniProtKB-UniRule"/>
</dbReference>
<dbReference type="GO" id="GO:0048527">
    <property type="term" value="P:lateral root development"/>
    <property type="evidence" value="ECO:0007669"/>
    <property type="project" value="EnsemblPlants"/>
</dbReference>
<dbReference type="GO" id="GO:0016560">
    <property type="term" value="P:protein import into peroxisome matrix, docking"/>
    <property type="evidence" value="ECO:0007669"/>
    <property type="project" value="EnsemblPlants"/>
</dbReference>
<dbReference type="GO" id="GO:0016485">
    <property type="term" value="P:protein processing"/>
    <property type="evidence" value="ECO:0000318"/>
    <property type="project" value="GO_Central"/>
</dbReference>
<dbReference type="GO" id="GO:0006515">
    <property type="term" value="P:protein quality control for misfolded or incompletely synthesized proteins"/>
    <property type="evidence" value="ECO:0007669"/>
    <property type="project" value="UniProtKB-UniRule"/>
</dbReference>
<dbReference type="GO" id="GO:0006625">
    <property type="term" value="P:protein targeting to peroxisome"/>
    <property type="evidence" value="ECO:0000318"/>
    <property type="project" value="GO_Central"/>
</dbReference>
<dbReference type="CDD" id="cd19500">
    <property type="entry name" value="RecA-like_Lon"/>
    <property type="match status" value="1"/>
</dbReference>
<dbReference type="FunFam" id="1.20.5.5270:FF:000002">
    <property type="entry name" value="Lon protease homolog"/>
    <property type="match status" value="1"/>
</dbReference>
<dbReference type="FunFam" id="1.10.8.60:FF:000095">
    <property type="entry name" value="Lon protease homolog 2, peroxisomal"/>
    <property type="match status" value="1"/>
</dbReference>
<dbReference type="FunFam" id="1.20.58.1480:FF:000005">
    <property type="entry name" value="Lon protease homolog 2, peroxisomal"/>
    <property type="match status" value="1"/>
</dbReference>
<dbReference type="FunFam" id="3.30.230.10:FF:000019">
    <property type="entry name" value="Lon protease homolog 2, peroxisomal"/>
    <property type="match status" value="1"/>
</dbReference>
<dbReference type="FunFam" id="3.40.50.300:FF:000651">
    <property type="entry name" value="Lon protease homolog 2, peroxisomal"/>
    <property type="match status" value="1"/>
</dbReference>
<dbReference type="Gene3D" id="1.10.8.60">
    <property type="match status" value="1"/>
</dbReference>
<dbReference type="Gene3D" id="1.20.5.5270">
    <property type="match status" value="1"/>
</dbReference>
<dbReference type="Gene3D" id="1.20.58.1480">
    <property type="match status" value="1"/>
</dbReference>
<dbReference type="Gene3D" id="3.30.230.10">
    <property type="match status" value="1"/>
</dbReference>
<dbReference type="Gene3D" id="2.30.130.40">
    <property type="entry name" value="LON domain-like"/>
    <property type="match status" value="1"/>
</dbReference>
<dbReference type="Gene3D" id="3.40.50.300">
    <property type="entry name" value="P-loop containing nucleotide triphosphate hydrolases"/>
    <property type="match status" value="1"/>
</dbReference>
<dbReference type="HAMAP" id="MF_03121">
    <property type="entry name" value="lonp2_euk"/>
    <property type="match status" value="1"/>
</dbReference>
<dbReference type="InterPro" id="IPR003593">
    <property type="entry name" value="AAA+_ATPase"/>
</dbReference>
<dbReference type="InterPro" id="IPR003959">
    <property type="entry name" value="ATPase_AAA_core"/>
</dbReference>
<dbReference type="InterPro" id="IPR004815">
    <property type="entry name" value="Lon_bac/euk-typ"/>
</dbReference>
<dbReference type="InterPro" id="IPR054594">
    <property type="entry name" value="Lon_lid"/>
</dbReference>
<dbReference type="InterPro" id="IPR008269">
    <property type="entry name" value="Lon_proteolytic"/>
</dbReference>
<dbReference type="InterPro" id="IPR027065">
    <property type="entry name" value="Lon_Prtase"/>
</dbReference>
<dbReference type="InterPro" id="IPR003111">
    <property type="entry name" value="Lon_prtase_N"/>
</dbReference>
<dbReference type="InterPro" id="IPR046336">
    <property type="entry name" value="Lon_prtase_N_sf"/>
</dbReference>
<dbReference type="InterPro" id="IPR027501">
    <property type="entry name" value="Lonp2_euk"/>
</dbReference>
<dbReference type="InterPro" id="IPR027417">
    <property type="entry name" value="P-loop_NTPase"/>
</dbReference>
<dbReference type="InterPro" id="IPR008268">
    <property type="entry name" value="Peptidase_S16_AS"/>
</dbReference>
<dbReference type="InterPro" id="IPR015947">
    <property type="entry name" value="PUA-like_sf"/>
</dbReference>
<dbReference type="InterPro" id="IPR020568">
    <property type="entry name" value="Ribosomal_Su5_D2-typ_SF"/>
</dbReference>
<dbReference type="InterPro" id="IPR014721">
    <property type="entry name" value="Ribsml_uS5_D2-typ_fold_subgr"/>
</dbReference>
<dbReference type="NCBIfam" id="TIGR00763">
    <property type="entry name" value="lon"/>
    <property type="match status" value="1"/>
</dbReference>
<dbReference type="PANTHER" id="PTHR10046">
    <property type="entry name" value="ATP DEPENDENT LON PROTEASE FAMILY MEMBER"/>
    <property type="match status" value="1"/>
</dbReference>
<dbReference type="Pfam" id="PF00004">
    <property type="entry name" value="AAA"/>
    <property type="match status" value="1"/>
</dbReference>
<dbReference type="Pfam" id="PF05362">
    <property type="entry name" value="Lon_C"/>
    <property type="match status" value="1"/>
</dbReference>
<dbReference type="Pfam" id="PF22667">
    <property type="entry name" value="Lon_lid"/>
    <property type="match status" value="1"/>
</dbReference>
<dbReference type="Pfam" id="PF02190">
    <property type="entry name" value="LON_substr_bdg"/>
    <property type="match status" value="1"/>
</dbReference>
<dbReference type="PIRSF" id="PIRSF001174">
    <property type="entry name" value="Lon_proteas"/>
    <property type="match status" value="1"/>
</dbReference>
<dbReference type="PRINTS" id="PR00830">
    <property type="entry name" value="ENDOLAPTASE"/>
</dbReference>
<dbReference type="SMART" id="SM00382">
    <property type="entry name" value="AAA"/>
    <property type="match status" value="1"/>
</dbReference>
<dbReference type="SMART" id="SM00464">
    <property type="entry name" value="LON"/>
    <property type="match status" value="1"/>
</dbReference>
<dbReference type="SUPFAM" id="SSF52540">
    <property type="entry name" value="P-loop containing nucleoside triphosphate hydrolases"/>
    <property type="match status" value="1"/>
</dbReference>
<dbReference type="SUPFAM" id="SSF88697">
    <property type="entry name" value="PUA domain-like"/>
    <property type="match status" value="1"/>
</dbReference>
<dbReference type="SUPFAM" id="SSF54211">
    <property type="entry name" value="Ribosomal protein S5 domain 2-like"/>
    <property type="match status" value="1"/>
</dbReference>
<dbReference type="PROSITE" id="PS51787">
    <property type="entry name" value="LON_N"/>
    <property type="match status" value="1"/>
</dbReference>
<dbReference type="PROSITE" id="PS51786">
    <property type="entry name" value="LON_PROTEOLYTIC"/>
    <property type="match status" value="1"/>
</dbReference>
<dbReference type="PROSITE" id="PS01046">
    <property type="entry name" value="LON_SER"/>
    <property type="match status" value="1"/>
</dbReference>
<comment type="function">
    <text evidence="1">ATP-dependent serine protease that mediates the selective degradation of misfolded and unassembled polypeptides in the peroxisomal matrix. Necessary for type 2 peroxisome targeting signal (PTS2)-containing protein processing and facilitates peroxisome matrix protein import.</text>
</comment>
<comment type="catalytic activity">
    <reaction evidence="1">
        <text>Hydrolysis of proteins in presence of ATP.</text>
        <dbReference type="EC" id="3.4.21.53"/>
    </reaction>
</comment>
<comment type="subcellular location">
    <subcellularLocation>
        <location evidence="1">Peroxisome matrix</location>
    </subcellularLocation>
</comment>
<comment type="similarity">
    <text evidence="1">Belongs to the peptidase S16 family.</text>
</comment>
<comment type="sequence caution" evidence="5">
    <conflict type="erroneous gene model prediction">
        <sequence resource="EMBL-CDS" id="BAD33324"/>
    </conflict>
</comment>
<comment type="sequence caution" evidence="5">
    <conflict type="erroneous gene model prediction">
        <sequence resource="EMBL-CDS" id="BAD46033"/>
    </conflict>
</comment>
<organism>
    <name type="scientific">Oryza sativa subsp. japonica</name>
    <name type="common">Rice</name>
    <dbReference type="NCBI Taxonomy" id="39947"/>
    <lineage>
        <taxon>Eukaryota</taxon>
        <taxon>Viridiplantae</taxon>
        <taxon>Streptophyta</taxon>
        <taxon>Embryophyta</taxon>
        <taxon>Tracheophyta</taxon>
        <taxon>Spermatophyta</taxon>
        <taxon>Magnoliopsida</taxon>
        <taxon>Liliopsida</taxon>
        <taxon>Poales</taxon>
        <taxon>Poaceae</taxon>
        <taxon>BOP clade</taxon>
        <taxon>Oryzoideae</taxon>
        <taxon>Oryzeae</taxon>
        <taxon>Oryzinae</taxon>
        <taxon>Oryza</taxon>
        <taxon>Oryza sativa</taxon>
    </lineage>
</organism>
<feature type="chain" id="PRO_0000395787" description="Lon protease homolog 2, peroxisomal">
    <location>
        <begin position="1"/>
        <end position="884"/>
    </location>
</feature>
<feature type="domain" description="Lon N-terminal" evidence="3">
    <location>
        <begin position="12"/>
        <end position="255"/>
    </location>
</feature>
<feature type="domain" description="Lon proteolytic" evidence="2">
    <location>
        <begin position="689"/>
        <end position="874"/>
    </location>
</feature>
<feature type="region of interest" description="Disordered" evidence="4">
    <location>
        <begin position="67"/>
        <end position="101"/>
    </location>
</feature>
<feature type="short sequence motif" description="Microbody targeting signal" evidence="1">
    <location>
        <begin position="882"/>
        <end position="884"/>
    </location>
</feature>
<feature type="compositionally biased region" description="Gly residues" evidence="4">
    <location>
        <begin position="75"/>
        <end position="89"/>
    </location>
</feature>
<feature type="active site" evidence="1">
    <location>
        <position position="780"/>
    </location>
</feature>
<feature type="active site" evidence="1">
    <location>
        <position position="823"/>
    </location>
</feature>
<feature type="binding site" evidence="1">
    <location>
        <begin position="408"/>
        <end position="415"/>
    </location>
    <ligand>
        <name>ATP</name>
        <dbReference type="ChEBI" id="CHEBI:30616"/>
    </ligand>
</feature>
<sequence length="884" mass="97278">MADAAVELPGRLAILPFRNKVLLPGAIVRIRCTNPSSVKLVEQELWQREEKGLIGVLPVHDSEAAGSLLSPGVGSDSGEGGSKAPGGSAGESTKQDTKNGKETIHWHSRGVAARALHLSRGVEKPSGRVTYIVVLEGLCRFSVQELSARGSYHVARVSRLDMTKTELEHAEQDPDLIALSRQFKATAMELISVLEQKQKTVGRTKVLLETVPVYRLADIFVASFEIGFEEQLSMLDSVDLKVRLSKATELVDRHLQSILVAEKITQKVEGQLSKSQKEFLLRQQMRAIKEELGDNDDDEDDVAALERKMQNAGMPANIWKHAQRELRRLRKMQPQQPGYSSSRTYLELLAELPWQKVSEERELDLRAAKESLDRDHYGLTKVKQRIIEYLAVRKLKPDARGPVLCFVGPPGVGKTSLASSIAKALNRKFIRISLGGVKDEADIRGHRRTYIGSMPGRLIDGLKRVSVSNPVMLLDEIDKTGSDVRGDPASALLEVLDPEQNKTFNDHYLNVPFDLSKVIFVATANRMQPIPPPLLDRMEVIELPGYTPEEKLKIAMKHLIPRVLEQHGLSSTYLQIPEAMVRLIIERYTREAGVRNLERNLAALARAAAVKVAEQDSALRLGKEIQPITTTLLDSRLADGGEVEMEVIPMGQDISNTYENPSPMIVDEAMLEKVLGPPRFDDSEAADRVASPGVSVGLVWTSFGGEVQFVEATAMVGKGDLHLTGQLGDVIKESAQLALTWVRARAADLNLSPTSDINLLESRDIHIHFPAGAVPKDGPSAGVTLVTSLVSLFSHRKVRADTAMTGEMTLRGLVLPVGGVKDKVLAAHRYGIKRVILPERNMKDLAEVPAPILSGLEILLVKRIEEVLDHAFEGGCPLRPHSKL</sequence>
<proteinExistence type="evidence at transcript level"/>
<accession>Q0J032</accession>
<accession>Q69SH2</accession>
<protein>
    <recommendedName>
        <fullName evidence="1">Lon protease homolog 2, peroxisomal</fullName>
        <ecNumber evidence="1">3.4.21.53</ecNumber>
    </recommendedName>
</protein>
<name>LONP2_ORYSJ</name>